<evidence type="ECO:0000256" key="1">
    <source>
        <dbReference type="SAM" id="MobiDB-lite"/>
    </source>
</evidence>
<organism>
    <name type="scientific">Streptomyces violaceoruber</name>
    <dbReference type="NCBI Taxonomy" id="1935"/>
    <lineage>
        <taxon>Bacteria</taxon>
        <taxon>Bacillati</taxon>
        <taxon>Actinomycetota</taxon>
        <taxon>Actinomycetes</taxon>
        <taxon>Kitasatosporales</taxon>
        <taxon>Streptomycetaceae</taxon>
        <taxon>Streptomyces</taxon>
        <taxon>Streptomyces violaceoruber group</taxon>
    </lineage>
</organism>
<keyword id="KW-0045">Antibiotic biosynthesis</keyword>
<sequence length="324" mass="35673">MVQPAATPVSLPSPTVHRSEHTVTVAAPPEALYALVADVTRWPAVFEPTVHVRHLAREGRTERFEIWAEVNGEIAHWRSRRVLDPVRRYVSFRQEHSRPPVTSMSGGWLFRPLADGRTEIVLRHRFTVADDDPAAVARIEEALDRNSARELGALAALAETGHPVDELVFSFTDTLPLQGAARDAYTFVERAERWAELLPHVAQCGADRAGTGLEQWLEMDTVTADGSTHTTRSARICRAPEWIAYNEQRTPRLVSGHSGEWTFAQTPEGPVATARHTVAVDPSGITEVLGPDATLADARAYLRDALGRNSLATLRHAAEAAQRA</sequence>
<dbReference type="EMBL" id="X16300">
    <property type="protein sequence ID" value="CAA34372.1"/>
    <property type="molecule type" value="Genomic_DNA"/>
</dbReference>
<dbReference type="EMBL" id="X16144">
    <property type="protein sequence ID" value="CAA34267.1"/>
    <property type="molecule type" value="Genomic_DNA"/>
</dbReference>
<dbReference type="EMBL" id="AJ011500">
    <property type="protein sequence ID" value="CAA09656.1"/>
    <property type="molecule type" value="Genomic_DNA"/>
</dbReference>
<dbReference type="PIR" id="S05396">
    <property type="entry name" value="S05396"/>
</dbReference>
<dbReference type="SMR" id="P16560"/>
<dbReference type="UniPathway" id="UPA00175"/>
<dbReference type="GO" id="GO:0017000">
    <property type="term" value="P:antibiotic biosynthetic process"/>
    <property type="evidence" value="ECO:0007669"/>
    <property type="project" value="UniProtKB-KW"/>
</dbReference>
<dbReference type="CDD" id="cd08861">
    <property type="entry name" value="OtcD1_ARO-CYC_like"/>
    <property type="match status" value="2"/>
</dbReference>
<dbReference type="Gene3D" id="3.30.530.20">
    <property type="match status" value="2"/>
</dbReference>
<dbReference type="InterPro" id="IPR019587">
    <property type="entry name" value="Polyketide_cyclase/dehydratase"/>
</dbReference>
<dbReference type="InterPro" id="IPR023393">
    <property type="entry name" value="START-like_dom_sf"/>
</dbReference>
<dbReference type="Pfam" id="PF10604">
    <property type="entry name" value="Polyketide_cyc2"/>
    <property type="match status" value="1"/>
</dbReference>
<dbReference type="SUPFAM" id="SSF55961">
    <property type="entry name" value="Bet v1-like"/>
    <property type="match status" value="2"/>
</dbReference>
<accession>P16560</accession>
<protein>
    <recommendedName>
        <fullName>Granaticin polyketide synthase bifunctional cyclase/dehydratase</fullName>
    </recommendedName>
</protein>
<feature type="chain" id="PRO_0000079761" description="Granaticin polyketide synthase bifunctional cyclase/dehydratase">
    <location>
        <begin position="1"/>
        <end position="324"/>
    </location>
</feature>
<feature type="region of interest" description="Disordered" evidence="1">
    <location>
        <begin position="1"/>
        <end position="21"/>
    </location>
</feature>
<reference key="1">
    <citation type="journal article" date="1989" name="EMBO J.">
        <title>Structure and deduced function of the granaticin-producing polyketide synthase gene cluster of Streptomyces violaceoruber Tu22.</title>
        <authorList>
            <person name="Sherman D.H."/>
            <person name="Malpartida F."/>
            <person name="Bibb M.J."/>
            <person name="Kieser H.M."/>
            <person name="Bibb M.J."/>
            <person name="Hopwood D.A."/>
        </authorList>
    </citation>
    <scope>NUCLEOTIDE SEQUENCE [GENOMIC DNA]</scope>
    <source>
        <strain>Tu22</strain>
    </source>
</reference>
<reference key="2">
    <citation type="journal article" date="1995" name="Mol. Gen. Genet.">
        <title>Identification of Streptomyces violaceoruber Tu22 genes involved in the biosynthesis of granaticin.</title>
        <authorList>
            <person name="Bechthold A."/>
            <person name="Sohng J.K."/>
            <person name="Smith T.M."/>
            <person name="Chu X."/>
            <person name="Floss H.G."/>
        </authorList>
    </citation>
    <scope>NUCLEOTIDE SEQUENCE [GENOMIC DNA]</scope>
    <source>
        <strain>Tu22</strain>
    </source>
</reference>
<reference key="3">
    <citation type="journal article" date="1998" name="Chem. Biol.">
        <title>The granaticin biosynthetic gene cluster of Streptomyces violaceoruber Tu22: sequence analysis and expression in a heterologous host.</title>
        <authorList>
            <person name="Ichinose K."/>
            <person name="Bedford D.J."/>
            <person name="Tornus D."/>
            <person name="Bechthold A."/>
            <person name="Bibb M.J."/>
            <person name="Revill W.P."/>
            <person name="Floss H.G."/>
            <person name="Hopwood D.A."/>
        </authorList>
    </citation>
    <scope>NUCLEOTIDE SEQUENCE [GENOMIC DNA]</scope>
    <source>
        <strain>Tu22</strain>
    </source>
</reference>
<proteinExistence type="predicted"/>
<comment type="function">
    <text>Is needed for correct cyclization of the oligoketide leading to isochromanequinone formation.</text>
</comment>
<comment type="pathway">
    <text>Antibiotic biosynthesis; granaticin biosynthesis.</text>
</comment>
<name>CYPK_STRVN</name>
<gene>
    <name type="primary">gra-orf4</name>
</gene>